<protein>
    <recommendedName>
        <fullName evidence="1">Probable cell division protein WhiA</fullName>
    </recommendedName>
</protein>
<accession>Q3K2D9</accession>
<organism>
    <name type="scientific">Streptococcus agalactiae serotype Ia (strain ATCC 27591 / A909 / CDC SS700)</name>
    <dbReference type="NCBI Taxonomy" id="205921"/>
    <lineage>
        <taxon>Bacteria</taxon>
        <taxon>Bacillati</taxon>
        <taxon>Bacillota</taxon>
        <taxon>Bacilli</taxon>
        <taxon>Lactobacillales</taxon>
        <taxon>Streptococcaceae</taxon>
        <taxon>Streptococcus</taxon>
    </lineage>
</organism>
<proteinExistence type="inferred from homology"/>
<reference key="1">
    <citation type="journal article" date="2005" name="Proc. Natl. Acad. Sci. U.S.A.">
        <title>Genome analysis of multiple pathogenic isolates of Streptococcus agalactiae: implications for the microbial 'pan-genome'.</title>
        <authorList>
            <person name="Tettelin H."/>
            <person name="Masignani V."/>
            <person name="Cieslewicz M.J."/>
            <person name="Donati C."/>
            <person name="Medini D."/>
            <person name="Ward N.L."/>
            <person name="Angiuoli S.V."/>
            <person name="Crabtree J."/>
            <person name="Jones A.L."/>
            <person name="Durkin A.S."/>
            <person name="DeBoy R.T."/>
            <person name="Davidsen T.M."/>
            <person name="Mora M."/>
            <person name="Scarselli M."/>
            <person name="Margarit y Ros I."/>
            <person name="Peterson J.D."/>
            <person name="Hauser C.R."/>
            <person name="Sundaram J.P."/>
            <person name="Nelson W.C."/>
            <person name="Madupu R."/>
            <person name="Brinkac L.M."/>
            <person name="Dodson R.J."/>
            <person name="Rosovitz M.J."/>
            <person name="Sullivan S.A."/>
            <person name="Daugherty S.C."/>
            <person name="Haft D.H."/>
            <person name="Selengut J."/>
            <person name="Gwinn M.L."/>
            <person name="Zhou L."/>
            <person name="Zafar N."/>
            <person name="Khouri H."/>
            <person name="Radune D."/>
            <person name="Dimitrov G."/>
            <person name="Watkins K."/>
            <person name="O'Connor K.J."/>
            <person name="Smith S."/>
            <person name="Utterback T.R."/>
            <person name="White O."/>
            <person name="Rubens C.E."/>
            <person name="Grandi G."/>
            <person name="Madoff L.C."/>
            <person name="Kasper D.L."/>
            <person name="Telford J.L."/>
            <person name="Wessels M.R."/>
            <person name="Rappuoli R."/>
            <person name="Fraser C.M."/>
        </authorList>
    </citation>
    <scope>NUCLEOTIDE SEQUENCE [LARGE SCALE GENOMIC DNA]</scope>
    <source>
        <strain>ATCC 27591 / A909 / CDC SS700</strain>
    </source>
</reference>
<dbReference type="EMBL" id="CP000114">
    <property type="protein sequence ID" value="ABA46160.1"/>
    <property type="molecule type" value="Genomic_DNA"/>
</dbReference>
<dbReference type="RefSeq" id="WP_000011316.1">
    <property type="nucleotide sequence ID" value="NC_007432.1"/>
</dbReference>
<dbReference type="SMR" id="Q3K2D9"/>
<dbReference type="GeneID" id="66885514"/>
<dbReference type="KEGG" id="sak:SAK_0683"/>
<dbReference type="HOGENOM" id="CLU_053282_0_0_9"/>
<dbReference type="GO" id="GO:0003677">
    <property type="term" value="F:DNA binding"/>
    <property type="evidence" value="ECO:0007669"/>
    <property type="project" value="UniProtKB-UniRule"/>
</dbReference>
<dbReference type="GO" id="GO:0051301">
    <property type="term" value="P:cell division"/>
    <property type="evidence" value="ECO:0007669"/>
    <property type="project" value="UniProtKB-UniRule"/>
</dbReference>
<dbReference type="GO" id="GO:0043937">
    <property type="term" value="P:regulation of sporulation"/>
    <property type="evidence" value="ECO:0007669"/>
    <property type="project" value="InterPro"/>
</dbReference>
<dbReference type="Gene3D" id="3.10.28.10">
    <property type="entry name" value="Homing endonucleases"/>
    <property type="match status" value="1"/>
</dbReference>
<dbReference type="HAMAP" id="MF_01420">
    <property type="entry name" value="HTH_type_WhiA"/>
    <property type="match status" value="1"/>
</dbReference>
<dbReference type="InterPro" id="IPR027434">
    <property type="entry name" value="Homing_endonucl"/>
</dbReference>
<dbReference type="InterPro" id="IPR018478">
    <property type="entry name" value="Sporu_reg_WhiA_N_dom"/>
</dbReference>
<dbReference type="InterPro" id="IPR003802">
    <property type="entry name" value="Sporulation_regulator_WhiA"/>
</dbReference>
<dbReference type="InterPro" id="IPR023054">
    <property type="entry name" value="Sporulation_regulator_WhiA_C"/>
</dbReference>
<dbReference type="InterPro" id="IPR039518">
    <property type="entry name" value="WhiA_LAGLIDADG_dom"/>
</dbReference>
<dbReference type="NCBIfam" id="TIGR00647">
    <property type="entry name" value="DNA_bind_WhiA"/>
    <property type="match status" value="1"/>
</dbReference>
<dbReference type="PANTHER" id="PTHR37307">
    <property type="entry name" value="CELL DIVISION PROTEIN WHIA-RELATED"/>
    <property type="match status" value="1"/>
</dbReference>
<dbReference type="PANTHER" id="PTHR37307:SF1">
    <property type="entry name" value="CELL DIVISION PROTEIN WHIA-RELATED"/>
    <property type="match status" value="1"/>
</dbReference>
<dbReference type="Pfam" id="PF02650">
    <property type="entry name" value="HTH_WhiA"/>
    <property type="match status" value="1"/>
</dbReference>
<dbReference type="Pfam" id="PF14527">
    <property type="entry name" value="LAGLIDADG_WhiA"/>
    <property type="match status" value="1"/>
</dbReference>
<dbReference type="Pfam" id="PF10298">
    <property type="entry name" value="WhiA_N"/>
    <property type="match status" value="1"/>
</dbReference>
<dbReference type="SUPFAM" id="SSF55608">
    <property type="entry name" value="Homing endonucleases"/>
    <property type="match status" value="1"/>
</dbReference>
<evidence type="ECO:0000255" key="1">
    <source>
        <dbReference type="HAMAP-Rule" id="MF_01420"/>
    </source>
</evidence>
<feature type="chain" id="PRO_0000376570" description="Probable cell division protein WhiA">
    <location>
        <begin position="1"/>
        <end position="303"/>
    </location>
</feature>
<feature type="DNA-binding region" description="H-T-H motif" evidence="1">
    <location>
        <begin position="272"/>
        <end position="303"/>
    </location>
</feature>
<sequence length="303" mass="34381">MSFTVKVKEELLGHKSENKMELSAIIKMSGSLGLANHGLNLSITTENAKIARHIYSMLEEHYHLQPEIKYHQKTNLRKNRVYTVFIEEKVDVILADLKLADAFFGIETGIEHSILDNDENGRAYLRGAFLSTGTVREPDSGKYQLEIFSVYLDHAQDLANLMKKFMLDAKVIEHKHGAVTYLQKAEDIMDFLIVIDAMEARDAFEEIKMIRETRNDINRANNVETANIARTITASMKTINNIIKIMDTIGFDALPSDLRQVAQVRVAHPDYSIQQIADSLETPLSKSGVNHRLRKINKIADEL</sequence>
<name>WHIA_STRA1</name>
<gene>
    <name evidence="1" type="primary">whiA</name>
    <name type="ordered locus">SAK_0683</name>
</gene>
<keyword id="KW-0131">Cell cycle</keyword>
<keyword id="KW-0132">Cell division</keyword>
<keyword id="KW-0238">DNA-binding</keyword>
<comment type="function">
    <text evidence="1">Involved in cell division and chromosome segregation.</text>
</comment>
<comment type="similarity">
    <text evidence="1">Belongs to the WhiA family.</text>
</comment>